<keyword id="KW-0030">Aminoacyl-tRNA synthetase</keyword>
<keyword id="KW-0067">ATP-binding</keyword>
<keyword id="KW-0963">Cytoplasm</keyword>
<keyword id="KW-0436">Ligase</keyword>
<keyword id="KW-0547">Nucleotide-binding</keyword>
<keyword id="KW-0648">Protein biosynthesis</keyword>
<dbReference type="EC" id="6.1.1.17" evidence="1"/>
<dbReference type="EMBL" id="CP000943">
    <property type="protein sequence ID" value="ACA17061.1"/>
    <property type="molecule type" value="Genomic_DNA"/>
</dbReference>
<dbReference type="SMR" id="B0UL61"/>
<dbReference type="STRING" id="426117.M446_2622"/>
<dbReference type="KEGG" id="met:M446_2622"/>
<dbReference type="eggNOG" id="COG0008">
    <property type="taxonomic scope" value="Bacteria"/>
</dbReference>
<dbReference type="HOGENOM" id="CLU_015768_6_1_5"/>
<dbReference type="GO" id="GO:0005829">
    <property type="term" value="C:cytosol"/>
    <property type="evidence" value="ECO:0007669"/>
    <property type="project" value="TreeGrafter"/>
</dbReference>
<dbReference type="GO" id="GO:0005524">
    <property type="term" value="F:ATP binding"/>
    <property type="evidence" value="ECO:0007669"/>
    <property type="project" value="UniProtKB-UniRule"/>
</dbReference>
<dbReference type="GO" id="GO:0004818">
    <property type="term" value="F:glutamate-tRNA ligase activity"/>
    <property type="evidence" value="ECO:0007669"/>
    <property type="project" value="UniProtKB-UniRule"/>
</dbReference>
<dbReference type="GO" id="GO:0000049">
    <property type="term" value="F:tRNA binding"/>
    <property type="evidence" value="ECO:0007669"/>
    <property type="project" value="InterPro"/>
</dbReference>
<dbReference type="GO" id="GO:0006424">
    <property type="term" value="P:glutamyl-tRNA aminoacylation"/>
    <property type="evidence" value="ECO:0007669"/>
    <property type="project" value="UniProtKB-UniRule"/>
</dbReference>
<dbReference type="Gene3D" id="1.10.10.350">
    <property type="match status" value="1"/>
</dbReference>
<dbReference type="Gene3D" id="3.40.50.620">
    <property type="entry name" value="HUPs"/>
    <property type="match status" value="1"/>
</dbReference>
<dbReference type="HAMAP" id="MF_00022">
    <property type="entry name" value="Glu_tRNA_synth_type1"/>
    <property type="match status" value="1"/>
</dbReference>
<dbReference type="InterPro" id="IPR045462">
    <property type="entry name" value="aa-tRNA-synth_I_cd-bd"/>
</dbReference>
<dbReference type="InterPro" id="IPR020751">
    <property type="entry name" value="aa-tRNA-synth_I_codon-bd_sub2"/>
</dbReference>
<dbReference type="InterPro" id="IPR001412">
    <property type="entry name" value="aa-tRNA-synth_I_CS"/>
</dbReference>
<dbReference type="InterPro" id="IPR008925">
    <property type="entry name" value="aa_tRNA-synth_I_cd-bd_sf"/>
</dbReference>
<dbReference type="InterPro" id="IPR004527">
    <property type="entry name" value="Glu-tRNA-ligase_bac/mito"/>
</dbReference>
<dbReference type="InterPro" id="IPR000924">
    <property type="entry name" value="Glu/Gln-tRNA-synth"/>
</dbReference>
<dbReference type="InterPro" id="IPR020058">
    <property type="entry name" value="Glu/Gln-tRNA-synth_Ib_cat-dom"/>
</dbReference>
<dbReference type="InterPro" id="IPR049940">
    <property type="entry name" value="GluQ/Sye"/>
</dbReference>
<dbReference type="InterPro" id="IPR014729">
    <property type="entry name" value="Rossmann-like_a/b/a_fold"/>
</dbReference>
<dbReference type="NCBIfam" id="TIGR00464">
    <property type="entry name" value="gltX_bact"/>
    <property type="match status" value="1"/>
</dbReference>
<dbReference type="PANTHER" id="PTHR43311">
    <property type="entry name" value="GLUTAMATE--TRNA LIGASE"/>
    <property type="match status" value="1"/>
</dbReference>
<dbReference type="PANTHER" id="PTHR43311:SF1">
    <property type="entry name" value="GLUTAMYL-Q TRNA(ASP) SYNTHETASE"/>
    <property type="match status" value="1"/>
</dbReference>
<dbReference type="Pfam" id="PF19269">
    <property type="entry name" value="Anticodon_2"/>
    <property type="match status" value="1"/>
</dbReference>
<dbReference type="Pfam" id="PF00749">
    <property type="entry name" value="tRNA-synt_1c"/>
    <property type="match status" value="1"/>
</dbReference>
<dbReference type="PRINTS" id="PR00987">
    <property type="entry name" value="TRNASYNTHGLU"/>
</dbReference>
<dbReference type="SUPFAM" id="SSF48163">
    <property type="entry name" value="An anticodon-binding domain of class I aminoacyl-tRNA synthetases"/>
    <property type="match status" value="1"/>
</dbReference>
<dbReference type="SUPFAM" id="SSF52374">
    <property type="entry name" value="Nucleotidylyl transferase"/>
    <property type="match status" value="1"/>
</dbReference>
<dbReference type="PROSITE" id="PS00178">
    <property type="entry name" value="AA_TRNA_LIGASE_I"/>
    <property type="match status" value="1"/>
</dbReference>
<comment type="function">
    <text evidence="1">Catalyzes the attachment of glutamate to tRNA(Glu) in a two-step reaction: glutamate is first activated by ATP to form Glu-AMP and then transferred to the acceptor end of tRNA(Glu).</text>
</comment>
<comment type="catalytic activity">
    <reaction evidence="1">
        <text>tRNA(Glu) + L-glutamate + ATP = L-glutamyl-tRNA(Glu) + AMP + diphosphate</text>
        <dbReference type="Rhea" id="RHEA:23540"/>
        <dbReference type="Rhea" id="RHEA-COMP:9663"/>
        <dbReference type="Rhea" id="RHEA-COMP:9680"/>
        <dbReference type="ChEBI" id="CHEBI:29985"/>
        <dbReference type="ChEBI" id="CHEBI:30616"/>
        <dbReference type="ChEBI" id="CHEBI:33019"/>
        <dbReference type="ChEBI" id="CHEBI:78442"/>
        <dbReference type="ChEBI" id="CHEBI:78520"/>
        <dbReference type="ChEBI" id="CHEBI:456215"/>
        <dbReference type="EC" id="6.1.1.17"/>
    </reaction>
</comment>
<comment type="subunit">
    <text evidence="1">Monomer.</text>
</comment>
<comment type="subcellular location">
    <subcellularLocation>
        <location evidence="1">Cytoplasm</location>
    </subcellularLocation>
</comment>
<comment type="similarity">
    <text evidence="1">Belongs to the class-I aminoacyl-tRNA synthetase family. Glutamate--tRNA ligase type 1 subfamily.</text>
</comment>
<reference key="1">
    <citation type="submission" date="2008-02" db="EMBL/GenBank/DDBJ databases">
        <title>Complete sequence of chromosome of Methylobacterium sp. 4-46.</title>
        <authorList>
            <consortium name="US DOE Joint Genome Institute"/>
            <person name="Copeland A."/>
            <person name="Lucas S."/>
            <person name="Lapidus A."/>
            <person name="Glavina del Rio T."/>
            <person name="Dalin E."/>
            <person name="Tice H."/>
            <person name="Bruce D."/>
            <person name="Goodwin L."/>
            <person name="Pitluck S."/>
            <person name="Chertkov O."/>
            <person name="Brettin T."/>
            <person name="Detter J.C."/>
            <person name="Han C."/>
            <person name="Kuske C.R."/>
            <person name="Schmutz J."/>
            <person name="Larimer F."/>
            <person name="Land M."/>
            <person name="Hauser L."/>
            <person name="Kyrpides N."/>
            <person name="Ivanova N."/>
            <person name="Marx C.J."/>
            <person name="Richardson P."/>
        </authorList>
    </citation>
    <scope>NUCLEOTIDE SEQUENCE [LARGE SCALE GENOMIC DNA]</scope>
    <source>
        <strain>4-46</strain>
    </source>
</reference>
<name>SYE2_METS4</name>
<proteinExistence type="inferred from homology"/>
<sequence length="447" mass="48171">MAPVVRFAPSPTGYLHIGNARPALFNALFARRAGGRFVLRLDDTDTARSTPEFAAAIVEDLAWLGIVPDETLRQSDRIALYDAAAERLRAAGRLYPAYETSDELERRRRRQLGRGLPPVYDRAALRLTAEERAAFEAEGRRPHWRFRLDPGPVTWTDLVRGPCHVEADSLSDPVLVREDGSYLYTLPSVVDDAEIGITHVIRGEDHVTNTAVQIQIFRALGAAVPVFAHHNLLTTASGEGLSKRLGHLSLRGLRDQGYEPGAVASLAVLTGSSEAVRAVPDLDGLAALLDLAHVSRAPAKFDPHDLDQLNARLLHEMPLAAAAPRLAALGIPAAAAEPFWAAVRANLATFSDAAGWWRVVAGPAAPLIADPALAARAAALLPPEPWDATTWKSWTEAVKAATGLKGKALFLPLRLALTGLDHGPDLSGLLPLIGRERAQRRLRGEAA</sequence>
<evidence type="ECO:0000255" key="1">
    <source>
        <dbReference type="HAMAP-Rule" id="MF_00022"/>
    </source>
</evidence>
<protein>
    <recommendedName>
        <fullName evidence="1">Glutamate--tRNA ligase 2</fullName>
        <ecNumber evidence="1">6.1.1.17</ecNumber>
    </recommendedName>
    <alternativeName>
        <fullName evidence="1">Glutamyl-tRNA synthetase 2</fullName>
        <shortName evidence="1">GluRS 2</shortName>
    </alternativeName>
</protein>
<gene>
    <name evidence="1" type="primary">gltX2</name>
    <name type="ordered locus">M446_2622</name>
</gene>
<accession>B0UL61</accession>
<feature type="chain" id="PRO_0000367714" description="Glutamate--tRNA ligase 2">
    <location>
        <begin position="1"/>
        <end position="447"/>
    </location>
</feature>
<feature type="short sequence motif" description="'HIGH' region" evidence="1">
    <location>
        <begin position="9"/>
        <end position="19"/>
    </location>
</feature>
<feature type="short sequence motif" description="'KMSKS' region" evidence="1">
    <location>
        <begin position="240"/>
        <end position="244"/>
    </location>
</feature>
<feature type="binding site" evidence="1">
    <location>
        <position position="243"/>
    </location>
    <ligand>
        <name>ATP</name>
        <dbReference type="ChEBI" id="CHEBI:30616"/>
    </ligand>
</feature>
<organism>
    <name type="scientific">Methylobacterium sp. (strain 4-46)</name>
    <dbReference type="NCBI Taxonomy" id="426117"/>
    <lineage>
        <taxon>Bacteria</taxon>
        <taxon>Pseudomonadati</taxon>
        <taxon>Pseudomonadota</taxon>
        <taxon>Alphaproteobacteria</taxon>
        <taxon>Hyphomicrobiales</taxon>
        <taxon>Methylobacteriaceae</taxon>
        <taxon>Methylobacterium</taxon>
    </lineage>
</organism>